<proteinExistence type="evidence at protein level"/>
<reference key="1">
    <citation type="journal article" date="1993" name="J. Biol. Chem.">
        <title>Isolation and heterologous expression of cloned cDNAs for two rabbit nasal microsomal proteins, CYP2A10 and CYP2A11, that are related to nasal microsomal cytochrome P450 form a.</title>
        <authorList>
            <person name="Peng H.-M."/>
            <person name="Ding X."/>
            <person name="Coon M.J."/>
        </authorList>
    </citation>
    <scope>NUCLEOTIDE SEQUENCE [MRNA]</scope>
    <source>
        <strain>New Zealand white</strain>
        <tissue>Nasal mucosa</tissue>
    </source>
</reference>
<reference key="2">
    <citation type="journal article" date="1994" name="Biochem. Biophys. Res. Commun.">
        <title>Structure-function analysis of CYP2A10 and CYP2A11, P450 cytochromes that differ in only eight amino acids but have strikingly different activities toward testosterone and coumarin.</title>
        <authorList>
            <person name="Ding X."/>
            <person name="Peng H.-M."/>
            <person name="Coon M.J."/>
        </authorList>
    </citation>
    <scope>CHARACTERIZATION</scope>
    <scope>MUTAGENESIS OF 62-ARG-ASP-63; GLN-104; ALA-117; THR-120 AND ARG-372</scope>
</reference>
<organism>
    <name type="scientific">Oryctolagus cuniculus</name>
    <name type="common">Rabbit</name>
    <dbReference type="NCBI Taxonomy" id="9986"/>
    <lineage>
        <taxon>Eukaryota</taxon>
        <taxon>Metazoa</taxon>
        <taxon>Chordata</taxon>
        <taxon>Craniata</taxon>
        <taxon>Vertebrata</taxon>
        <taxon>Euteleostomi</taxon>
        <taxon>Mammalia</taxon>
        <taxon>Eutheria</taxon>
        <taxon>Euarchontoglires</taxon>
        <taxon>Glires</taxon>
        <taxon>Lagomorpha</taxon>
        <taxon>Leporidae</taxon>
        <taxon>Oryctolagus</taxon>
    </lineage>
</organism>
<name>CP2AB_RABIT</name>
<sequence length="494" mass="57277">MLASGLLLAALLACLTVMILLSVWRQRKLWGKLPPGPTPLPFIGNYLQLNTEQMYDSLMKIRDRYGPVFTIHLGPRRIVVLCGQEAVKEALVDQAEDFSGRGEQATFDWLFKGYGVAFSTWERARPLRRFAISTLRDFGVGKRGIEERIQEEAGFLIEAFRDTRGAFIDPTFFLSRTVSNVISSIVFGDRFDYEDKEFLSLLRMMLGSFQFTATPTGQLYEMFYSVMKHLPGPQQQAFKELEGLRDFIAKKVERNQRTLDPNSPRDFIDSFLIRMQEEKKDPKSEFHMKNLVLTTLNLFFAGTETVSTTMRYGFLLLMKHPDVEAKVHEEIDRVIGRNRQPKFEDRAKMPYTEAVIHEIQRFTDMIPMGLARRVTRDTKFRDFLLPKGTEVFPMLGSVLKDPKFFSKPREFYPQHFLDEKGQFKKSDAFMPFSVGKRYCLGEGLARMELFLFFTTIMQNFRFRSQQAPQDIDVSPKHVGFATIPRTYTMSFVPR</sequence>
<gene>
    <name type="primary">CYP2A11</name>
</gene>
<comment type="function">
    <text>Catalyzes the oxygenation of a variety of substrates, including ethanol and procarcinogens such as N-nitrosodiethylamine and phenacetin. Has no or little activity as a coumarin 7-hydroxylase and in the formation of androstenedione from testosterone.</text>
</comment>
<comment type="catalytic activity">
    <reaction>
        <text>an organic molecule + reduced [NADPH--hemoprotein reductase] + O2 = an alcohol + oxidized [NADPH--hemoprotein reductase] + H2O + H(+)</text>
        <dbReference type="Rhea" id="RHEA:17149"/>
        <dbReference type="Rhea" id="RHEA-COMP:11964"/>
        <dbReference type="Rhea" id="RHEA-COMP:11965"/>
        <dbReference type="ChEBI" id="CHEBI:15377"/>
        <dbReference type="ChEBI" id="CHEBI:15378"/>
        <dbReference type="ChEBI" id="CHEBI:15379"/>
        <dbReference type="ChEBI" id="CHEBI:30879"/>
        <dbReference type="ChEBI" id="CHEBI:57618"/>
        <dbReference type="ChEBI" id="CHEBI:58210"/>
        <dbReference type="ChEBI" id="CHEBI:142491"/>
        <dbReference type="EC" id="1.14.14.1"/>
    </reaction>
</comment>
<comment type="cofactor">
    <cofactor evidence="1">
        <name>heme</name>
        <dbReference type="ChEBI" id="CHEBI:30413"/>
    </cofactor>
</comment>
<comment type="subcellular location">
    <subcellularLocation>
        <location>Endoplasmic reticulum membrane</location>
        <topology>Peripheral membrane protein</topology>
    </subcellularLocation>
    <subcellularLocation>
        <location>Microsome membrane</location>
        <topology>Peripheral membrane protein</topology>
    </subcellularLocation>
</comment>
<comment type="tissue specificity">
    <text>Expressed in liver and lung as well as in nasal tissues.</text>
</comment>
<comment type="similarity">
    <text evidence="4">Belongs to the cytochrome P450 family.</text>
</comment>
<accession>Q05556</accession>
<feature type="chain" id="PRO_0000051674" description="Cytochrome P450 2A11">
    <location>
        <begin position="1"/>
        <end position="494"/>
    </location>
</feature>
<feature type="binding site" description="axial binding residue" evidence="1">
    <location>
        <position position="439"/>
    </location>
    <ligand>
        <name>heme</name>
        <dbReference type="ChEBI" id="CHEBI:30413"/>
    </ligand>
    <ligandPart>
        <name>Fe</name>
        <dbReference type="ChEBI" id="CHEBI:18248"/>
    </ligandPart>
</feature>
<feature type="modified residue" description="N6-acetyllysine" evidence="2">
    <location>
        <position position="379"/>
    </location>
</feature>
<feature type="mutagenesis site" description="No effect. Almost as active as CYP2A10 in coumarin hydroxylation and approximately half as active as CYP2A10 in androstenedione formation; when associated with L-104; V-117 and S-120." evidence="3">
    <original>RD</original>
    <variation>SE</variation>
    <location>
        <begin position="62"/>
        <end position="63"/>
    </location>
</feature>
<feature type="mutagenesis site" description="No effect. Almost as active as CYP2A10 in coumarin hydroxylation and approximately half as active as CYP2A10 in androstenedione formation; when associated with 62-SE-63; V-117 and S-120." evidence="3">
    <original>Q</original>
    <variation>L</variation>
    <location>
        <position position="104"/>
    </location>
</feature>
<feature type="mutagenesis site" description="No effect. Almost as active as CYP2A10 in coumarin hydroxylation and approximately half as active as CYP2A10 in androstenedione formation; when associated with 62-SE-63; L-104 and S-120." evidence="3">
    <original>A</original>
    <variation>V</variation>
    <location>
        <position position="117"/>
    </location>
</feature>
<feature type="mutagenesis site" description="No effect. Almost as active as CYP2A10 in coumarin hydroxylation and approximately half as active as CYP2A10 in androstenedione formation; when associated with 62-SE-63; L-104 and V-117." evidence="3">
    <original>T</original>
    <variation>S</variation>
    <location>
        <position position="120"/>
    </location>
</feature>
<feature type="mutagenesis site" description="Significant increase in the rate of hydroxylation of testosterone, but not of coumarin." evidence="3">
    <original>R</original>
    <variation>H</variation>
    <location>
        <position position="372"/>
    </location>
</feature>
<evidence type="ECO:0000250" key="1"/>
<evidence type="ECO:0000250" key="2">
    <source>
        <dbReference type="UniProtKB" id="Q64458"/>
    </source>
</evidence>
<evidence type="ECO:0000269" key="3">
    <source>
    </source>
</evidence>
<evidence type="ECO:0000305" key="4"/>
<dbReference type="EC" id="1.14.14.1"/>
<dbReference type="EMBL" id="L10237">
    <property type="protein sequence ID" value="AAA31372.1"/>
    <property type="molecule type" value="mRNA"/>
</dbReference>
<dbReference type="PIR" id="B47494">
    <property type="entry name" value="B47494"/>
</dbReference>
<dbReference type="RefSeq" id="NP_001164519.1">
    <property type="nucleotide sequence ID" value="NM_001171048.1"/>
</dbReference>
<dbReference type="SMR" id="Q05556"/>
<dbReference type="FunCoup" id="Q05556">
    <property type="interactions" value="237"/>
</dbReference>
<dbReference type="GeneID" id="100328596"/>
<dbReference type="KEGG" id="ocu:100328596"/>
<dbReference type="CTD" id="100328596"/>
<dbReference type="InParanoid" id="Q05556"/>
<dbReference type="OrthoDB" id="2789670at2759"/>
<dbReference type="Proteomes" id="UP000001811">
    <property type="component" value="Unplaced"/>
</dbReference>
<dbReference type="GO" id="GO:0005789">
    <property type="term" value="C:endoplasmic reticulum membrane"/>
    <property type="evidence" value="ECO:0007669"/>
    <property type="project" value="UniProtKB-SubCell"/>
</dbReference>
<dbReference type="GO" id="GO:0008392">
    <property type="term" value="F:arachidonate epoxygenase activity"/>
    <property type="evidence" value="ECO:0007669"/>
    <property type="project" value="TreeGrafter"/>
</dbReference>
<dbReference type="GO" id="GO:0020037">
    <property type="term" value="F:heme binding"/>
    <property type="evidence" value="ECO:0007669"/>
    <property type="project" value="InterPro"/>
</dbReference>
<dbReference type="GO" id="GO:0005506">
    <property type="term" value="F:iron ion binding"/>
    <property type="evidence" value="ECO:0007669"/>
    <property type="project" value="InterPro"/>
</dbReference>
<dbReference type="GO" id="GO:0016712">
    <property type="term" value="F:oxidoreductase activity, acting on paired donors, with incorporation or reduction of molecular oxygen, reduced flavin or flavoprotein as one donor, and incorporation of one atom of oxygen"/>
    <property type="evidence" value="ECO:0007669"/>
    <property type="project" value="UniProtKB-EC"/>
</dbReference>
<dbReference type="GO" id="GO:0009804">
    <property type="term" value="P:coumarin metabolic process"/>
    <property type="evidence" value="ECO:0007669"/>
    <property type="project" value="TreeGrafter"/>
</dbReference>
<dbReference type="GO" id="GO:0019373">
    <property type="term" value="P:epoxygenase P450 pathway"/>
    <property type="evidence" value="ECO:0007669"/>
    <property type="project" value="TreeGrafter"/>
</dbReference>
<dbReference type="GO" id="GO:0006805">
    <property type="term" value="P:xenobiotic metabolic process"/>
    <property type="evidence" value="ECO:0007669"/>
    <property type="project" value="TreeGrafter"/>
</dbReference>
<dbReference type="CDD" id="cd20668">
    <property type="entry name" value="CYP2A"/>
    <property type="match status" value="1"/>
</dbReference>
<dbReference type="FunFam" id="1.10.630.10:FF:000238">
    <property type="entry name" value="Cytochrome P450 2A6"/>
    <property type="match status" value="1"/>
</dbReference>
<dbReference type="Gene3D" id="1.10.630.10">
    <property type="entry name" value="Cytochrome P450"/>
    <property type="match status" value="1"/>
</dbReference>
<dbReference type="InterPro" id="IPR001128">
    <property type="entry name" value="Cyt_P450"/>
</dbReference>
<dbReference type="InterPro" id="IPR017972">
    <property type="entry name" value="Cyt_P450_CS"/>
</dbReference>
<dbReference type="InterPro" id="IPR002401">
    <property type="entry name" value="Cyt_P450_E_grp-I"/>
</dbReference>
<dbReference type="InterPro" id="IPR008067">
    <property type="entry name" value="Cyt_P450_E_grp-I_CYP2A-like"/>
</dbReference>
<dbReference type="InterPro" id="IPR036396">
    <property type="entry name" value="Cyt_P450_sf"/>
</dbReference>
<dbReference type="InterPro" id="IPR050182">
    <property type="entry name" value="Cytochrome_P450_fam2"/>
</dbReference>
<dbReference type="PANTHER" id="PTHR24300:SF180">
    <property type="entry name" value="CYTOCHROME P450 2A6"/>
    <property type="match status" value="1"/>
</dbReference>
<dbReference type="PANTHER" id="PTHR24300">
    <property type="entry name" value="CYTOCHROME P450 508A4-RELATED"/>
    <property type="match status" value="1"/>
</dbReference>
<dbReference type="Pfam" id="PF00067">
    <property type="entry name" value="p450"/>
    <property type="match status" value="1"/>
</dbReference>
<dbReference type="PRINTS" id="PR00463">
    <property type="entry name" value="EP450I"/>
</dbReference>
<dbReference type="PRINTS" id="PR01684">
    <property type="entry name" value="EP450ICYP2A"/>
</dbReference>
<dbReference type="PRINTS" id="PR00385">
    <property type="entry name" value="P450"/>
</dbReference>
<dbReference type="SUPFAM" id="SSF48264">
    <property type="entry name" value="Cytochrome P450"/>
    <property type="match status" value="1"/>
</dbReference>
<dbReference type="PROSITE" id="PS00086">
    <property type="entry name" value="CYTOCHROME_P450"/>
    <property type="match status" value="1"/>
</dbReference>
<keyword id="KW-0007">Acetylation</keyword>
<keyword id="KW-0256">Endoplasmic reticulum</keyword>
<keyword id="KW-0349">Heme</keyword>
<keyword id="KW-0408">Iron</keyword>
<keyword id="KW-0472">Membrane</keyword>
<keyword id="KW-0479">Metal-binding</keyword>
<keyword id="KW-0492">Microsome</keyword>
<keyword id="KW-0503">Monooxygenase</keyword>
<keyword id="KW-0560">Oxidoreductase</keyword>
<keyword id="KW-1185">Reference proteome</keyword>
<protein>
    <recommendedName>
        <fullName>Cytochrome P450 2A11</fullName>
        <ecNumber>1.14.14.1</ecNumber>
    </recommendedName>
    <alternativeName>
        <fullName>CYPIIA11</fullName>
    </alternativeName>
    <alternativeName>
        <fullName>Cytochrome P450-IIA11</fullName>
    </alternativeName>
</protein>